<protein>
    <recommendedName>
        <fullName evidence="1">Acetyl-coenzyme A carboxylase carboxyl transferase subunit alpha</fullName>
        <shortName evidence="1">ACCase subunit alpha</shortName>
        <shortName evidence="1">Acetyl-CoA carboxylase carboxyltransferase subunit alpha</shortName>
        <ecNumber evidence="1">2.1.3.15</ecNumber>
    </recommendedName>
</protein>
<sequence length="319" mass="35496">MSLNFLDFEQPIAELEAKIDSLTAVSRQDEKLDINLDEEVQRLREKSVELTRKIFSDLGAWQIAQLARHPRRPYTLDYIANIFTDFEELAGDRAYADDKAIVGGIARLDGRPVMIIGHQKGRETKEKIRRNFGMPAPEGYRKALRLMEMAERFKLPIITFIDTPGAYPGVGAEERGQSEAIARNLREMSRLNVPIVCTVIGEGGSGGALAIGVGDKVNMLQYSTYSVISPEGCASILWKSADKAPLAAEAMGITAHRLKELKMIDSVIPEPLGGAHRDYAAIAISLKAQLLADLNDLDVLNDEELLNRRYQRLMNYGYC</sequence>
<reference key="1">
    <citation type="submission" date="2008-02" db="EMBL/GenBank/DDBJ databases">
        <title>Complete sequence of Yersinia pseudotuberculosis YPIII.</title>
        <authorList>
            <consortium name="US DOE Joint Genome Institute"/>
            <person name="Copeland A."/>
            <person name="Lucas S."/>
            <person name="Lapidus A."/>
            <person name="Glavina del Rio T."/>
            <person name="Dalin E."/>
            <person name="Tice H."/>
            <person name="Bruce D."/>
            <person name="Goodwin L."/>
            <person name="Pitluck S."/>
            <person name="Munk A.C."/>
            <person name="Brettin T."/>
            <person name="Detter J.C."/>
            <person name="Han C."/>
            <person name="Tapia R."/>
            <person name="Schmutz J."/>
            <person name="Larimer F."/>
            <person name="Land M."/>
            <person name="Hauser L."/>
            <person name="Challacombe J.F."/>
            <person name="Green L."/>
            <person name="Lindler L.E."/>
            <person name="Nikolich M.P."/>
            <person name="Richardson P."/>
        </authorList>
    </citation>
    <scope>NUCLEOTIDE SEQUENCE [LARGE SCALE GENOMIC DNA]</scope>
    <source>
        <strain>YPIII</strain>
    </source>
</reference>
<feature type="chain" id="PRO_1000134542" description="Acetyl-coenzyme A carboxylase carboxyl transferase subunit alpha">
    <location>
        <begin position="1"/>
        <end position="319"/>
    </location>
</feature>
<feature type="domain" description="CoA carboxyltransferase C-terminal" evidence="2">
    <location>
        <begin position="35"/>
        <end position="296"/>
    </location>
</feature>
<evidence type="ECO:0000255" key="1">
    <source>
        <dbReference type="HAMAP-Rule" id="MF_00823"/>
    </source>
</evidence>
<evidence type="ECO:0000255" key="2">
    <source>
        <dbReference type="PROSITE-ProRule" id="PRU01137"/>
    </source>
</evidence>
<proteinExistence type="inferred from homology"/>
<name>ACCA_YERPY</name>
<comment type="function">
    <text evidence="1">Component of the acetyl coenzyme A carboxylase (ACC) complex. First, biotin carboxylase catalyzes the carboxylation of biotin on its carrier protein (BCCP) and then the CO(2) group is transferred by the carboxyltransferase to acetyl-CoA to form malonyl-CoA.</text>
</comment>
<comment type="catalytic activity">
    <reaction evidence="1">
        <text>N(6)-carboxybiotinyl-L-lysyl-[protein] + acetyl-CoA = N(6)-biotinyl-L-lysyl-[protein] + malonyl-CoA</text>
        <dbReference type="Rhea" id="RHEA:54728"/>
        <dbReference type="Rhea" id="RHEA-COMP:10505"/>
        <dbReference type="Rhea" id="RHEA-COMP:10506"/>
        <dbReference type="ChEBI" id="CHEBI:57288"/>
        <dbReference type="ChEBI" id="CHEBI:57384"/>
        <dbReference type="ChEBI" id="CHEBI:83144"/>
        <dbReference type="ChEBI" id="CHEBI:83145"/>
        <dbReference type="EC" id="2.1.3.15"/>
    </reaction>
</comment>
<comment type="pathway">
    <text evidence="1">Lipid metabolism; malonyl-CoA biosynthesis; malonyl-CoA from acetyl-CoA: step 1/1.</text>
</comment>
<comment type="subunit">
    <text evidence="1">Acetyl-CoA carboxylase is a heterohexamer composed of biotin carboxyl carrier protein (AccB), biotin carboxylase (AccC) and two subunits each of ACCase subunit alpha (AccA) and ACCase subunit beta (AccD).</text>
</comment>
<comment type="subcellular location">
    <subcellularLocation>
        <location evidence="1">Cytoplasm</location>
    </subcellularLocation>
</comment>
<comment type="similarity">
    <text evidence="1">Belongs to the AccA family.</text>
</comment>
<dbReference type="EC" id="2.1.3.15" evidence="1"/>
<dbReference type="EMBL" id="CP000950">
    <property type="protein sequence ID" value="ACA67383.1"/>
    <property type="molecule type" value="Genomic_DNA"/>
</dbReference>
<dbReference type="RefSeq" id="WP_002212147.1">
    <property type="nucleotide sequence ID" value="NZ_CP009792.1"/>
</dbReference>
<dbReference type="SMR" id="B1JQH6"/>
<dbReference type="GeneID" id="57977501"/>
<dbReference type="KEGG" id="ypy:YPK_1082"/>
<dbReference type="PATRIC" id="fig|502800.11.peg.1714"/>
<dbReference type="UniPathway" id="UPA00655">
    <property type="reaction ID" value="UER00711"/>
</dbReference>
<dbReference type="GO" id="GO:0009317">
    <property type="term" value="C:acetyl-CoA carboxylase complex"/>
    <property type="evidence" value="ECO:0007669"/>
    <property type="project" value="InterPro"/>
</dbReference>
<dbReference type="GO" id="GO:0003989">
    <property type="term" value="F:acetyl-CoA carboxylase activity"/>
    <property type="evidence" value="ECO:0007669"/>
    <property type="project" value="InterPro"/>
</dbReference>
<dbReference type="GO" id="GO:0005524">
    <property type="term" value="F:ATP binding"/>
    <property type="evidence" value="ECO:0007669"/>
    <property type="project" value="UniProtKB-KW"/>
</dbReference>
<dbReference type="GO" id="GO:0016743">
    <property type="term" value="F:carboxyl- or carbamoyltransferase activity"/>
    <property type="evidence" value="ECO:0007669"/>
    <property type="project" value="UniProtKB-UniRule"/>
</dbReference>
<dbReference type="GO" id="GO:0006633">
    <property type="term" value="P:fatty acid biosynthetic process"/>
    <property type="evidence" value="ECO:0007669"/>
    <property type="project" value="UniProtKB-KW"/>
</dbReference>
<dbReference type="GO" id="GO:2001295">
    <property type="term" value="P:malonyl-CoA biosynthetic process"/>
    <property type="evidence" value="ECO:0007669"/>
    <property type="project" value="UniProtKB-UniRule"/>
</dbReference>
<dbReference type="FunFam" id="3.90.226.10:FF:000008">
    <property type="entry name" value="Acetyl-coenzyme A carboxylase carboxyl transferase subunit alpha"/>
    <property type="match status" value="1"/>
</dbReference>
<dbReference type="Gene3D" id="3.90.226.10">
    <property type="entry name" value="2-enoyl-CoA Hydratase, Chain A, domain 1"/>
    <property type="match status" value="1"/>
</dbReference>
<dbReference type="HAMAP" id="MF_00823">
    <property type="entry name" value="AcetylCoA_CT_alpha"/>
    <property type="match status" value="1"/>
</dbReference>
<dbReference type="InterPro" id="IPR001095">
    <property type="entry name" value="Acetyl_CoA_COase_a_su"/>
</dbReference>
<dbReference type="InterPro" id="IPR029045">
    <property type="entry name" value="ClpP/crotonase-like_dom_sf"/>
</dbReference>
<dbReference type="InterPro" id="IPR011763">
    <property type="entry name" value="COA_CT_C"/>
</dbReference>
<dbReference type="NCBIfam" id="TIGR00513">
    <property type="entry name" value="accA"/>
    <property type="match status" value="1"/>
</dbReference>
<dbReference type="NCBIfam" id="NF041504">
    <property type="entry name" value="AccA_sub"/>
    <property type="match status" value="1"/>
</dbReference>
<dbReference type="NCBIfam" id="NF004344">
    <property type="entry name" value="PRK05724.1"/>
    <property type="match status" value="1"/>
</dbReference>
<dbReference type="PANTHER" id="PTHR42853">
    <property type="entry name" value="ACETYL-COENZYME A CARBOXYLASE CARBOXYL TRANSFERASE SUBUNIT ALPHA"/>
    <property type="match status" value="1"/>
</dbReference>
<dbReference type="PANTHER" id="PTHR42853:SF3">
    <property type="entry name" value="ACETYL-COENZYME A CARBOXYLASE CARBOXYL TRANSFERASE SUBUNIT ALPHA, CHLOROPLASTIC"/>
    <property type="match status" value="1"/>
</dbReference>
<dbReference type="Pfam" id="PF03255">
    <property type="entry name" value="ACCA"/>
    <property type="match status" value="1"/>
</dbReference>
<dbReference type="PRINTS" id="PR01069">
    <property type="entry name" value="ACCCTRFRASEA"/>
</dbReference>
<dbReference type="SUPFAM" id="SSF52096">
    <property type="entry name" value="ClpP/crotonase"/>
    <property type="match status" value="1"/>
</dbReference>
<dbReference type="PROSITE" id="PS50989">
    <property type="entry name" value="COA_CT_CTER"/>
    <property type="match status" value="1"/>
</dbReference>
<keyword id="KW-0067">ATP-binding</keyword>
<keyword id="KW-0963">Cytoplasm</keyword>
<keyword id="KW-0275">Fatty acid biosynthesis</keyword>
<keyword id="KW-0276">Fatty acid metabolism</keyword>
<keyword id="KW-0444">Lipid biosynthesis</keyword>
<keyword id="KW-0443">Lipid metabolism</keyword>
<keyword id="KW-0547">Nucleotide-binding</keyword>
<keyword id="KW-0808">Transferase</keyword>
<organism>
    <name type="scientific">Yersinia pseudotuberculosis serotype O:3 (strain YPIII)</name>
    <dbReference type="NCBI Taxonomy" id="502800"/>
    <lineage>
        <taxon>Bacteria</taxon>
        <taxon>Pseudomonadati</taxon>
        <taxon>Pseudomonadota</taxon>
        <taxon>Gammaproteobacteria</taxon>
        <taxon>Enterobacterales</taxon>
        <taxon>Yersiniaceae</taxon>
        <taxon>Yersinia</taxon>
    </lineage>
</organism>
<accession>B1JQH6</accession>
<gene>
    <name evidence="1" type="primary">accA</name>
    <name type="ordered locus">YPK_1082</name>
</gene>